<gene>
    <name evidence="1" type="primary">thrS</name>
    <name type="ordered locus">Cag_1715</name>
</gene>
<name>SYT_CHLCH</name>
<accession>Q3APV9</accession>
<sequence>MSDHKESTGAIALTLPDRSVRNVAMGSTGYDVALSIGRKLAQDALAIKLNGVVCDLNTLINSDAAIEIITFTSPEGPEIFWHSSSHLMAQAIEELFAGSKFGAGPAIEQGFYYDVSSEHRFREEDLRAIEARMLEISKRDSSVQRQEMSREEAIAFFTSVRNDPYKVEILTETLKNVERVSLYHQGDFTDLCTGPHLPSTGKIKAVLLTNISASYWRGDSNREQMQRIYGITFPSEKLLKEHVARIEEAKRRDHRKLGAELELFLLSPEVGSGLPMWLPKGAIIRSELESFLREEQRKRGYVPVYTPHIGNIELYKRSGHYPYYSDSQFPPLTYHDEDGKQEQYLLKPMNCPHHHLIYSSKMRSYRDLPLRFTEFGTVYRHEQSGELNGLARARGFTQDDSHIYCRPDQLVDEICSAIELTQFVFKTLGFAEVQTRLSLHDPANQAKYGGTAEVWEQAEKDVQEAAERMGVDYFIGIGEASFYGPKIDFIVRDAIGRKWQLGTVQVDYVMPERFDLTYVGSDGQKHRPVVIHRAPFGSMERFIGLLIEHTAGNFPLWLAPVQVAVLPIAEENHDYATTVYRRLLAAGIRAELDTRSEKINRKIRDAEMSKTPCMLVIGQKEQANGEVSLRRHRQGDAGRFATDELIETLKQEIANRQ</sequence>
<reference key="1">
    <citation type="submission" date="2005-08" db="EMBL/GenBank/DDBJ databases">
        <title>Complete sequence of Chlorobium chlorochromatii CaD3.</title>
        <authorList>
            <consortium name="US DOE Joint Genome Institute"/>
            <person name="Copeland A."/>
            <person name="Lucas S."/>
            <person name="Lapidus A."/>
            <person name="Barry K."/>
            <person name="Detter J.C."/>
            <person name="Glavina T."/>
            <person name="Hammon N."/>
            <person name="Israni S."/>
            <person name="Pitluck S."/>
            <person name="Bryant D."/>
            <person name="Schmutz J."/>
            <person name="Larimer F."/>
            <person name="Land M."/>
            <person name="Kyrpides N."/>
            <person name="Ivanova N."/>
            <person name="Richardson P."/>
        </authorList>
    </citation>
    <scope>NUCLEOTIDE SEQUENCE [LARGE SCALE GENOMIC DNA]</scope>
    <source>
        <strain>CaD3</strain>
    </source>
</reference>
<dbReference type="EC" id="6.1.1.3" evidence="1"/>
<dbReference type="EMBL" id="CP000108">
    <property type="protein sequence ID" value="ABB28966.1"/>
    <property type="molecule type" value="Genomic_DNA"/>
</dbReference>
<dbReference type="SMR" id="Q3APV9"/>
<dbReference type="STRING" id="340177.Cag_1715"/>
<dbReference type="KEGG" id="cch:Cag_1715"/>
<dbReference type="eggNOG" id="COG0441">
    <property type="taxonomic scope" value="Bacteria"/>
</dbReference>
<dbReference type="HOGENOM" id="CLU_008554_0_1_10"/>
<dbReference type="OrthoDB" id="9802304at2"/>
<dbReference type="GO" id="GO:0005737">
    <property type="term" value="C:cytoplasm"/>
    <property type="evidence" value="ECO:0007669"/>
    <property type="project" value="UniProtKB-SubCell"/>
</dbReference>
<dbReference type="GO" id="GO:0005524">
    <property type="term" value="F:ATP binding"/>
    <property type="evidence" value="ECO:0007669"/>
    <property type="project" value="UniProtKB-UniRule"/>
</dbReference>
<dbReference type="GO" id="GO:0046872">
    <property type="term" value="F:metal ion binding"/>
    <property type="evidence" value="ECO:0007669"/>
    <property type="project" value="UniProtKB-KW"/>
</dbReference>
<dbReference type="GO" id="GO:0004829">
    <property type="term" value="F:threonine-tRNA ligase activity"/>
    <property type="evidence" value="ECO:0007669"/>
    <property type="project" value="UniProtKB-UniRule"/>
</dbReference>
<dbReference type="GO" id="GO:0000049">
    <property type="term" value="F:tRNA binding"/>
    <property type="evidence" value="ECO:0007669"/>
    <property type="project" value="UniProtKB-KW"/>
</dbReference>
<dbReference type="GO" id="GO:0006435">
    <property type="term" value="P:threonyl-tRNA aminoacylation"/>
    <property type="evidence" value="ECO:0007669"/>
    <property type="project" value="UniProtKB-UniRule"/>
</dbReference>
<dbReference type="CDD" id="cd01667">
    <property type="entry name" value="TGS_ThrRS"/>
    <property type="match status" value="1"/>
</dbReference>
<dbReference type="CDD" id="cd00860">
    <property type="entry name" value="ThrRS_anticodon"/>
    <property type="match status" value="1"/>
</dbReference>
<dbReference type="CDD" id="cd00771">
    <property type="entry name" value="ThrRS_core"/>
    <property type="match status" value="1"/>
</dbReference>
<dbReference type="FunFam" id="3.30.54.20:FF:000002">
    <property type="entry name" value="Threonine--tRNA ligase"/>
    <property type="match status" value="1"/>
</dbReference>
<dbReference type="FunFam" id="3.30.930.10:FF:000002">
    <property type="entry name" value="Threonine--tRNA ligase"/>
    <property type="match status" value="1"/>
</dbReference>
<dbReference type="FunFam" id="3.40.50.800:FF:000001">
    <property type="entry name" value="Threonine--tRNA ligase"/>
    <property type="match status" value="1"/>
</dbReference>
<dbReference type="FunFam" id="3.30.980.10:FF:000005">
    <property type="entry name" value="Threonyl-tRNA synthetase, mitochondrial"/>
    <property type="match status" value="1"/>
</dbReference>
<dbReference type="Gene3D" id="3.10.20.30">
    <property type="match status" value="1"/>
</dbReference>
<dbReference type="Gene3D" id="3.30.54.20">
    <property type="match status" value="1"/>
</dbReference>
<dbReference type="Gene3D" id="3.40.50.800">
    <property type="entry name" value="Anticodon-binding domain"/>
    <property type="match status" value="1"/>
</dbReference>
<dbReference type="Gene3D" id="3.30.930.10">
    <property type="entry name" value="Bira Bifunctional Protein, Domain 2"/>
    <property type="match status" value="1"/>
</dbReference>
<dbReference type="Gene3D" id="3.30.980.10">
    <property type="entry name" value="Threonyl-trna Synthetase, Chain A, domain 2"/>
    <property type="match status" value="1"/>
</dbReference>
<dbReference type="HAMAP" id="MF_00184">
    <property type="entry name" value="Thr_tRNA_synth"/>
    <property type="match status" value="1"/>
</dbReference>
<dbReference type="InterPro" id="IPR002314">
    <property type="entry name" value="aa-tRNA-synt_IIb"/>
</dbReference>
<dbReference type="InterPro" id="IPR006195">
    <property type="entry name" value="aa-tRNA-synth_II"/>
</dbReference>
<dbReference type="InterPro" id="IPR045864">
    <property type="entry name" value="aa-tRNA-synth_II/BPL/LPL"/>
</dbReference>
<dbReference type="InterPro" id="IPR004154">
    <property type="entry name" value="Anticodon-bd"/>
</dbReference>
<dbReference type="InterPro" id="IPR036621">
    <property type="entry name" value="Anticodon-bd_dom_sf"/>
</dbReference>
<dbReference type="InterPro" id="IPR012675">
    <property type="entry name" value="Beta-grasp_dom_sf"/>
</dbReference>
<dbReference type="InterPro" id="IPR004095">
    <property type="entry name" value="TGS"/>
</dbReference>
<dbReference type="InterPro" id="IPR012676">
    <property type="entry name" value="TGS-like"/>
</dbReference>
<dbReference type="InterPro" id="IPR002320">
    <property type="entry name" value="Thr-tRNA-ligase_IIa"/>
</dbReference>
<dbReference type="InterPro" id="IPR018163">
    <property type="entry name" value="Thr/Ala-tRNA-synth_IIc_edit"/>
</dbReference>
<dbReference type="InterPro" id="IPR047246">
    <property type="entry name" value="ThrRS_anticodon"/>
</dbReference>
<dbReference type="InterPro" id="IPR033728">
    <property type="entry name" value="ThrRS_core"/>
</dbReference>
<dbReference type="InterPro" id="IPR012947">
    <property type="entry name" value="tRNA_SAD"/>
</dbReference>
<dbReference type="NCBIfam" id="TIGR00418">
    <property type="entry name" value="thrS"/>
    <property type="match status" value="1"/>
</dbReference>
<dbReference type="PANTHER" id="PTHR11451:SF44">
    <property type="entry name" value="THREONINE--TRNA LIGASE, CHLOROPLASTIC_MITOCHONDRIAL 2"/>
    <property type="match status" value="1"/>
</dbReference>
<dbReference type="PANTHER" id="PTHR11451">
    <property type="entry name" value="THREONINE-TRNA LIGASE"/>
    <property type="match status" value="1"/>
</dbReference>
<dbReference type="Pfam" id="PF03129">
    <property type="entry name" value="HGTP_anticodon"/>
    <property type="match status" value="1"/>
</dbReference>
<dbReference type="Pfam" id="PF02824">
    <property type="entry name" value="TGS"/>
    <property type="match status" value="1"/>
</dbReference>
<dbReference type="Pfam" id="PF00587">
    <property type="entry name" value="tRNA-synt_2b"/>
    <property type="match status" value="1"/>
</dbReference>
<dbReference type="Pfam" id="PF07973">
    <property type="entry name" value="tRNA_SAD"/>
    <property type="match status" value="1"/>
</dbReference>
<dbReference type="PRINTS" id="PR01047">
    <property type="entry name" value="TRNASYNTHTHR"/>
</dbReference>
<dbReference type="SMART" id="SM00863">
    <property type="entry name" value="tRNA_SAD"/>
    <property type="match status" value="1"/>
</dbReference>
<dbReference type="SUPFAM" id="SSF52954">
    <property type="entry name" value="Class II aaRS ABD-related"/>
    <property type="match status" value="1"/>
</dbReference>
<dbReference type="SUPFAM" id="SSF55681">
    <property type="entry name" value="Class II aaRS and biotin synthetases"/>
    <property type="match status" value="1"/>
</dbReference>
<dbReference type="SUPFAM" id="SSF81271">
    <property type="entry name" value="TGS-like"/>
    <property type="match status" value="1"/>
</dbReference>
<dbReference type="SUPFAM" id="SSF55186">
    <property type="entry name" value="ThrRS/AlaRS common domain"/>
    <property type="match status" value="1"/>
</dbReference>
<dbReference type="PROSITE" id="PS50862">
    <property type="entry name" value="AA_TRNA_LIGASE_II"/>
    <property type="match status" value="1"/>
</dbReference>
<dbReference type="PROSITE" id="PS51880">
    <property type="entry name" value="TGS"/>
    <property type="match status" value="1"/>
</dbReference>
<feature type="chain" id="PRO_1000020365" description="Threonine--tRNA ligase">
    <location>
        <begin position="1"/>
        <end position="657"/>
    </location>
</feature>
<feature type="domain" description="TGS" evidence="2">
    <location>
        <begin position="1"/>
        <end position="70"/>
    </location>
</feature>
<feature type="region of interest" description="Catalytic" evidence="1">
    <location>
        <begin position="253"/>
        <end position="555"/>
    </location>
</feature>
<feature type="binding site" evidence="1">
    <location>
        <position position="351"/>
    </location>
    <ligand>
        <name>Zn(2+)</name>
        <dbReference type="ChEBI" id="CHEBI:29105"/>
    </ligand>
</feature>
<feature type="binding site" evidence="1">
    <location>
        <position position="402"/>
    </location>
    <ligand>
        <name>Zn(2+)</name>
        <dbReference type="ChEBI" id="CHEBI:29105"/>
    </ligand>
</feature>
<feature type="binding site" evidence="1">
    <location>
        <position position="532"/>
    </location>
    <ligand>
        <name>Zn(2+)</name>
        <dbReference type="ChEBI" id="CHEBI:29105"/>
    </ligand>
</feature>
<protein>
    <recommendedName>
        <fullName evidence="1">Threonine--tRNA ligase</fullName>
        <ecNumber evidence="1">6.1.1.3</ecNumber>
    </recommendedName>
    <alternativeName>
        <fullName evidence="1">Threonyl-tRNA synthetase</fullName>
        <shortName evidence="1">ThrRS</shortName>
    </alternativeName>
</protein>
<organism>
    <name type="scientific">Chlorobium chlorochromatii (strain CaD3)</name>
    <dbReference type="NCBI Taxonomy" id="340177"/>
    <lineage>
        <taxon>Bacteria</taxon>
        <taxon>Pseudomonadati</taxon>
        <taxon>Chlorobiota</taxon>
        <taxon>Chlorobiia</taxon>
        <taxon>Chlorobiales</taxon>
        <taxon>Chlorobiaceae</taxon>
        <taxon>Chlorobium/Pelodictyon group</taxon>
        <taxon>Chlorobium</taxon>
    </lineage>
</organism>
<evidence type="ECO:0000255" key="1">
    <source>
        <dbReference type="HAMAP-Rule" id="MF_00184"/>
    </source>
</evidence>
<evidence type="ECO:0000255" key="2">
    <source>
        <dbReference type="PROSITE-ProRule" id="PRU01228"/>
    </source>
</evidence>
<comment type="function">
    <text evidence="1">Catalyzes the attachment of threonine to tRNA(Thr) in a two-step reaction: L-threonine is first activated by ATP to form Thr-AMP and then transferred to the acceptor end of tRNA(Thr). Also edits incorrectly charged L-seryl-tRNA(Thr).</text>
</comment>
<comment type="catalytic activity">
    <reaction evidence="1">
        <text>tRNA(Thr) + L-threonine + ATP = L-threonyl-tRNA(Thr) + AMP + diphosphate + H(+)</text>
        <dbReference type="Rhea" id="RHEA:24624"/>
        <dbReference type="Rhea" id="RHEA-COMP:9670"/>
        <dbReference type="Rhea" id="RHEA-COMP:9704"/>
        <dbReference type="ChEBI" id="CHEBI:15378"/>
        <dbReference type="ChEBI" id="CHEBI:30616"/>
        <dbReference type="ChEBI" id="CHEBI:33019"/>
        <dbReference type="ChEBI" id="CHEBI:57926"/>
        <dbReference type="ChEBI" id="CHEBI:78442"/>
        <dbReference type="ChEBI" id="CHEBI:78534"/>
        <dbReference type="ChEBI" id="CHEBI:456215"/>
        <dbReference type="EC" id="6.1.1.3"/>
    </reaction>
</comment>
<comment type="cofactor">
    <cofactor evidence="1">
        <name>Zn(2+)</name>
        <dbReference type="ChEBI" id="CHEBI:29105"/>
    </cofactor>
    <text evidence="1">Binds 1 zinc ion per subunit.</text>
</comment>
<comment type="subunit">
    <text evidence="1">Homodimer.</text>
</comment>
<comment type="subcellular location">
    <subcellularLocation>
        <location evidence="1">Cytoplasm</location>
    </subcellularLocation>
</comment>
<comment type="similarity">
    <text evidence="1">Belongs to the class-II aminoacyl-tRNA synthetase family.</text>
</comment>
<keyword id="KW-0030">Aminoacyl-tRNA synthetase</keyword>
<keyword id="KW-0067">ATP-binding</keyword>
<keyword id="KW-0963">Cytoplasm</keyword>
<keyword id="KW-0436">Ligase</keyword>
<keyword id="KW-0479">Metal-binding</keyword>
<keyword id="KW-0547">Nucleotide-binding</keyword>
<keyword id="KW-0648">Protein biosynthesis</keyword>
<keyword id="KW-0694">RNA-binding</keyword>
<keyword id="KW-0820">tRNA-binding</keyword>
<keyword id="KW-0862">Zinc</keyword>
<proteinExistence type="inferred from homology"/>